<protein>
    <recommendedName>
        <fullName evidence="1">dTTP/UTP pyrophosphatase</fullName>
        <shortName evidence="1">dTTPase/UTPase</shortName>
        <ecNumber evidence="1">3.6.1.9</ecNumber>
    </recommendedName>
    <alternativeName>
        <fullName evidence="1">Nucleoside triphosphate pyrophosphatase</fullName>
    </alternativeName>
    <alternativeName>
        <fullName evidence="1">Nucleotide pyrophosphatase</fullName>
        <shortName evidence="1">Nucleotide PPase</shortName>
    </alternativeName>
</protein>
<feature type="chain" id="PRO_0000267267" description="dTTP/UTP pyrophosphatase">
    <location>
        <begin position="1"/>
        <end position="209"/>
    </location>
</feature>
<feature type="active site" description="Proton acceptor" evidence="1">
    <location>
        <position position="88"/>
    </location>
</feature>
<feature type="site" description="Important for substrate specificity" evidence="1">
    <location>
        <position position="20"/>
    </location>
</feature>
<feature type="site" description="Important for substrate specificity" evidence="1">
    <location>
        <position position="89"/>
    </location>
</feature>
<feature type="site" description="Important for substrate specificity" evidence="1">
    <location>
        <position position="173"/>
    </location>
</feature>
<dbReference type="EC" id="3.6.1.9" evidence="1"/>
<dbReference type="EMBL" id="BX571965">
    <property type="protein sequence ID" value="CAH35154.1"/>
    <property type="molecule type" value="Genomic_DNA"/>
</dbReference>
<dbReference type="RefSeq" id="WP_004185695.1">
    <property type="nucleotide sequence ID" value="NZ_CP009538.1"/>
</dbReference>
<dbReference type="RefSeq" id="YP_107781.1">
    <property type="nucleotide sequence ID" value="NC_006350.1"/>
</dbReference>
<dbReference type="SMR" id="Q63VT5"/>
<dbReference type="STRING" id="272560.BPSL1159"/>
<dbReference type="KEGG" id="bps:BPSL1159"/>
<dbReference type="PATRIC" id="fig|272560.51.peg.379"/>
<dbReference type="eggNOG" id="COG0424">
    <property type="taxonomic scope" value="Bacteria"/>
</dbReference>
<dbReference type="Proteomes" id="UP000000605">
    <property type="component" value="Chromosome 1"/>
</dbReference>
<dbReference type="GO" id="GO:0005737">
    <property type="term" value="C:cytoplasm"/>
    <property type="evidence" value="ECO:0007669"/>
    <property type="project" value="UniProtKB-SubCell"/>
</dbReference>
<dbReference type="GO" id="GO:0036218">
    <property type="term" value="F:dTTP diphosphatase activity"/>
    <property type="evidence" value="ECO:0007669"/>
    <property type="project" value="RHEA"/>
</dbReference>
<dbReference type="GO" id="GO:0036221">
    <property type="term" value="F:UTP diphosphatase activity"/>
    <property type="evidence" value="ECO:0007669"/>
    <property type="project" value="RHEA"/>
</dbReference>
<dbReference type="GO" id="GO:0009117">
    <property type="term" value="P:nucleotide metabolic process"/>
    <property type="evidence" value="ECO:0007669"/>
    <property type="project" value="UniProtKB-KW"/>
</dbReference>
<dbReference type="CDD" id="cd00555">
    <property type="entry name" value="Maf"/>
    <property type="match status" value="1"/>
</dbReference>
<dbReference type="Gene3D" id="3.90.950.10">
    <property type="match status" value="1"/>
</dbReference>
<dbReference type="HAMAP" id="MF_00528">
    <property type="entry name" value="Maf"/>
    <property type="match status" value="1"/>
</dbReference>
<dbReference type="InterPro" id="IPR029001">
    <property type="entry name" value="ITPase-like_fam"/>
</dbReference>
<dbReference type="InterPro" id="IPR003697">
    <property type="entry name" value="Maf-like"/>
</dbReference>
<dbReference type="NCBIfam" id="TIGR00172">
    <property type="entry name" value="maf"/>
    <property type="match status" value="1"/>
</dbReference>
<dbReference type="PANTHER" id="PTHR43213">
    <property type="entry name" value="BIFUNCTIONAL DTTP/UTP PYROPHOSPHATASE/METHYLTRANSFERASE PROTEIN-RELATED"/>
    <property type="match status" value="1"/>
</dbReference>
<dbReference type="PANTHER" id="PTHR43213:SF5">
    <property type="entry name" value="BIFUNCTIONAL DTTP_UTP PYROPHOSPHATASE_METHYLTRANSFERASE PROTEIN-RELATED"/>
    <property type="match status" value="1"/>
</dbReference>
<dbReference type="Pfam" id="PF02545">
    <property type="entry name" value="Maf"/>
    <property type="match status" value="1"/>
</dbReference>
<dbReference type="PIRSF" id="PIRSF006305">
    <property type="entry name" value="Maf"/>
    <property type="match status" value="1"/>
</dbReference>
<dbReference type="SUPFAM" id="SSF52972">
    <property type="entry name" value="ITPase-like"/>
    <property type="match status" value="1"/>
</dbReference>
<keyword id="KW-0963">Cytoplasm</keyword>
<keyword id="KW-0378">Hydrolase</keyword>
<keyword id="KW-0546">Nucleotide metabolism</keyword>
<keyword id="KW-1185">Reference proteome</keyword>
<organism>
    <name type="scientific">Burkholderia pseudomallei (strain K96243)</name>
    <dbReference type="NCBI Taxonomy" id="272560"/>
    <lineage>
        <taxon>Bacteria</taxon>
        <taxon>Pseudomonadati</taxon>
        <taxon>Pseudomonadota</taxon>
        <taxon>Betaproteobacteria</taxon>
        <taxon>Burkholderiales</taxon>
        <taxon>Burkholderiaceae</taxon>
        <taxon>Burkholderia</taxon>
        <taxon>pseudomallei group</taxon>
    </lineage>
</organism>
<name>NTPPA_BURPS</name>
<accession>Q63VT5</accession>
<sequence length="209" mass="21984">MPEHAAPSYPFVYLASQSPRRRELLDQLGVRYELLAPAPDEDAEALEAELPGEAPDHYVLRVCVAKAQAARARLVARGLPAAPVLVADTTVTIDGAILGKPADAADALAMLARLAGRTHDVLTALAVIDATGELMPPALSRSAVRFAPAAREALARYVETGEPFGKAGAYAIQGRAAEFVERIDGSHSGIMGLPLFETAALLRAAHVAF</sequence>
<proteinExistence type="inferred from homology"/>
<gene>
    <name type="ordered locus">BPSL1159</name>
</gene>
<evidence type="ECO:0000255" key="1">
    <source>
        <dbReference type="HAMAP-Rule" id="MF_00528"/>
    </source>
</evidence>
<comment type="function">
    <text evidence="1">Nucleoside triphosphate pyrophosphatase that hydrolyzes dTTP and UTP. May have a dual role in cell division arrest and in preventing the incorporation of modified nucleotides into cellular nucleic acids.</text>
</comment>
<comment type="catalytic activity">
    <reaction evidence="1">
        <text>dTTP + H2O = dTMP + diphosphate + H(+)</text>
        <dbReference type="Rhea" id="RHEA:28534"/>
        <dbReference type="ChEBI" id="CHEBI:15377"/>
        <dbReference type="ChEBI" id="CHEBI:15378"/>
        <dbReference type="ChEBI" id="CHEBI:33019"/>
        <dbReference type="ChEBI" id="CHEBI:37568"/>
        <dbReference type="ChEBI" id="CHEBI:63528"/>
        <dbReference type="EC" id="3.6.1.9"/>
    </reaction>
</comment>
<comment type="catalytic activity">
    <reaction evidence="1">
        <text>UTP + H2O = UMP + diphosphate + H(+)</text>
        <dbReference type="Rhea" id="RHEA:29395"/>
        <dbReference type="ChEBI" id="CHEBI:15377"/>
        <dbReference type="ChEBI" id="CHEBI:15378"/>
        <dbReference type="ChEBI" id="CHEBI:33019"/>
        <dbReference type="ChEBI" id="CHEBI:46398"/>
        <dbReference type="ChEBI" id="CHEBI:57865"/>
        <dbReference type="EC" id="3.6.1.9"/>
    </reaction>
</comment>
<comment type="cofactor">
    <cofactor evidence="1">
        <name>a divalent metal cation</name>
        <dbReference type="ChEBI" id="CHEBI:60240"/>
    </cofactor>
</comment>
<comment type="subcellular location">
    <subcellularLocation>
        <location evidence="1">Cytoplasm</location>
    </subcellularLocation>
</comment>
<comment type="similarity">
    <text evidence="1">Belongs to the Maf family. YhdE subfamily.</text>
</comment>
<reference key="1">
    <citation type="journal article" date="2004" name="Proc. Natl. Acad. Sci. U.S.A.">
        <title>Genomic plasticity of the causative agent of melioidosis, Burkholderia pseudomallei.</title>
        <authorList>
            <person name="Holden M.T.G."/>
            <person name="Titball R.W."/>
            <person name="Peacock S.J."/>
            <person name="Cerdeno-Tarraga A.-M."/>
            <person name="Atkins T."/>
            <person name="Crossman L.C."/>
            <person name="Pitt T."/>
            <person name="Churcher C."/>
            <person name="Mungall K.L."/>
            <person name="Bentley S.D."/>
            <person name="Sebaihia M."/>
            <person name="Thomson N.R."/>
            <person name="Bason N."/>
            <person name="Beacham I.R."/>
            <person name="Brooks K."/>
            <person name="Brown K.A."/>
            <person name="Brown N.F."/>
            <person name="Challis G.L."/>
            <person name="Cherevach I."/>
            <person name="Chillingworth T."/>
            <person name="Cronin A."/>
            <person name="Crossett B."/>
            <person name="Davis P."/>
            <person name="DeShazer D."/>
            <person name="Feltwell T."/>
            <person name="Fraser A."/>
            <person name="Hance Z."/>
            <person name="Hauser H."/>
            <person name="Holroyd S."/>
            <person name="Jagels K."/>
            <person name="Keith K.E."/>
            <person name="Maddison M."/>
            <person name="Moule S."/>
            <person name="Price C."/>
            <person name="Quail M.A."/>
            <person name="Rabbinowitsch E."/>
            <person name="Rutherford K."/>
            <person name="Sanders M."/>
            <person name="Simmonds M."/>
            <person name="Songsivilai S."/>
            <person name="Stevens K."/>
            <person name="Tumapa S."/>
            <person name="Vesaratchavest M."/>
            <person name="Whitehead S."/>
            <person name="Yeats C."/>
            <person name="Barrell B.G."/>
            <person name="Oyston P.C.F."/>
            <person name="Parkhill J."/>
        </authorList>
    </citation>
    <scope>NUCLEOTIDE SEQUENCE [LARGE SCALE GENOMIC DNA]</scope>
    <source>
        <strain>K96243</strain>
    </source>
</reference>